<protein>
    <recommendedName>
        <fullName evidence="1">UPF0173 metal-dependent hydrolase TV0864</fullName>
    </recommendedName>
</protein>
<dbReference type="EMBL" id="BA000011">
    <property type="protein sequence ID" value="BAB60006.1"/>
    <property type="molecule type" value="Genomic_DNA"/>
</dbReference>
<dbReference type="RefSeq" id="WP_010917108.1">
    <property type="nucleotide sequence ID" value="NC_002689.2"/>
</dbReference>
<dbReference type="SMR" id="Q97AE6"/>
<dbReference type="STRING" id="273116.gene:9381656"/>
<dbReference type="PaxDb" id="273116-14325081"/>
<dbReference type="GeneID" id="1441956"/>
<dbReference type="KEGG" id="tvo:TVG0885567"/>
<dbReference type="eggNOG" id="arCOG00497">
    <property type="taxonomic scope" value="Archaea"/>
</dbReference>
<dbReference type="HOGENOM" id="CLU_070010_4_0_2"/>
<dbReference type="OrthoDB" id="28313at2157"/>
<dbReference type="PhylomeDB" id="Q97AE6"/>
<dbReference type="Proteomes" id="UP000001017">
    <property type="component" value="Chromosome"/>
</dbReference>
<dbReference type="GO" id="GO:0016787">
    <property type="term" value="F:hydrolase activity"/>
    <property type="evidence" value="ECO:0007669"/>
    <property type="project" value="UniProtKB-UniRule"/>
</dbReference>
<dbReference type="Gene3D" id="3.60.15.10">
    <property type="entry name" value="Ribonuclease Z/Hydroxyacylglutathione hydrolase-like"/>
    <property type="match status" value="1"/>
</dbReference>
<dbReference type="HAMAP" id="MF_00457">
    <property type="entry name" value="UPF0173"/>
    <property type="match status" value="1"/>
</dbReference>
<dbReference type="InterPro" id="IPR001279">
    <property type="entry name" value="Metallo-B-lactamas"/>
</dbReference>
<dbReference type="InterPro" id="IPR036866">
    <property type="entry name" value="RibonucZ/Hydroxyglut_hydro"/>
</dbReference>
<dbReference type="InterPro" id="IPR022877">
    <property type="entry name" value="UPF0173"/>
</dbReference>
<dbReference type="InterPro" id="IPR050114">
    <property type="entry name" value="UPF0173_UPF0282_UlaG_hydrolase"/>
</dbReference>
<dbReference type="NCBIfam" id="NF001911">
    <property type="entry name" value="PRK00685.1"/>
    <property type="match status" value="1"/>
</dbReference>
<dbReference type="PANTHER" id="PTHR43546:SF3">
    <property type="entry name" value="UPF0173 METAL-DEPENDENT HYDROLASE MJ1163"/>
    <property type="match status" value="1"/>
</dbReference>
<dbReference type="PANTHER" id="PTHR43546">
    <property type="entry name" value="UPF0173 METAL-DEPENDENT HYDROLASE MJ1163-RELATED"/>
    <property type="match status" value="1"/>
</dbReference>
<dbReference type="Pfam" id="PF13483">
    <property type="entry name" value="Lactamase_B_3"/>
    <property type="match status" value="1"/>
</dbReference>
<dbReference type="SMART" id="SM00849">
    <property type="entry name" value="Lactamase_B"/>
    <property type="match status" value="1"/>
</dbReference>
<dbReference type="SUPFAM" id="SSF56281">
    <property type="entry name" value="Metallo-hydrolase/oxidoreductase"/>
    <property type="match status" value="1"/>
</dbReference>
<keyword id="KW-0378">Hydrolase</keyword>
<comment type="similarity">
    <text evidence="1">Belongs to the UPF0173 family.</text>
</comment>
<accession>Q97AE6</accession>
<sequence length="223" mass="24208">MDVKIIWHGHACFSIEGKKNVLIDPFLTGNPMAKVKAEDLNPDIILVTHGHYDHAADAVSISKRTGAPVLSVFELSEIFKESGINTIDINPGGTVEFEGVSIKATIATHSSSYDGRYAGNPVGYVIDIGRKIYHAGDTGYFKDMELIGSVDRPEISLLPIGGHYTMDVDGAVEALKMLKSPIAIPMHYNTFDVIKADPLRFKNLAAAVGTYVIVPKVEEPVEL</sequence>
<proteinExistence type="inferred from homology"/>
<gene>
    <name type="ordered locus">TV0864</name>
    <name type="ORF">TVG0885567</name>
</gene>
<reference key="1">
    <citation type="journal article" date="2000" name="Proc. Natl. Acad. Sci. U.S.A.">
        <title>Archaeal adaptation to higher temperatures revealed by genomic sequence of Thermoplasma volcanium.</title>
        <authorList>
            <person name="Kawashima T."/>
            <person name="Amano N."/>
            <person name="Koike H."/>
            <person name="Makino S."/>
            <person name="Higuchi S."/>
            <person name="Kawashima-Ohya Y."/>
            <person name="Watanabe K."/>
            <person name="Yamazaki M."/>
            <person name="Kanehori K."/>
            <person name="Kawamoto T."/>
            <person name="Nunoshiba T."/>
            <person name="Yamamoto Y."/>
            <person name="Aramaki H."/>
            <person name="Makino K."/>
            <person name="Suzuki M."/>
        </authorList>
    </citation>
    <scope>NUCLEOTIDE SEQUENCE [LARGE SCALE GENOMIC DNA]</scope>
    <source>
        <strain>ATCC 51530 / DSM 4299 / JCM 9571 / NBRC 15438 / GSS1</strain>
    </source>
</reference>
<organism>
    <name type="scientific">Thermoplasma volcanium (strain ATCC 51530 / DSM 4299 / JCM 9571 / NBRC 15438 / GSS1)</name>
    <dbReference type="NCBI Taxonomy" id="273116"/>
    <lineage>
        <taxon>Archaea</taxon>
        <taxon>Methanobacteriati</taxon>
        <taxon>Thermoplasmatota</taxon>
        <taxon>Thermoplasmata</taxon>
        <taxon>Thermoplasmatales</taxon>
        <taxon>Thermoplasmataceae</taxon>
        <taxon>Thermoplasma</taxon>
    </lineage>
</organism>
<name>Y864_THEVO</name>
<evidence type="ECO:0000255" key="1">
    <source>
        <dbReference type="HAMAP-Rule" id="MF_00457"/>
    </source>
</evidence>
<feature type="chain" id="PRO_0000156408" description="UPF0173 metal-dependent hydrolase TV0864">
    <location>
        <begin position="1"/>
        <end position="223"/>
    </location>
</feature>